<gene>
    <name type="primary">glpX</name>
    <name type="ordered locus">TBFG_11120</name>
</gene>
<sequence length="362" mass="38084">MTAEGSGSSTAAVASHDPSHTRPSRREAPDRNLAMELVRVTEAGAMAAGRWVGRGDKEGGDGAAVDAMRELVNSVSMRGVVVIGEGEKDHAPMLYNGEEVGNGDGPECDFAVDPIDGTTLMSKGMTNAISVLAVADRGTMFDPSAVFYMNKIAVGPDAAHVLDITAPISENIRAVAKVKDLSVRDMTVCILDRPRHAQLIHDVRATGARIRLITDGDVAGAISACRPHSGTDLLAGIGGTPEGIIAAAAIRCMGGAIQAQLAPRDDAERRKALEAGYDLNQVLTTEDLVSGENVFFCATGVTDGDLLKGVRYYPGGCTTHSIVMRSKSGTVRMIEAYHRLSKLNEYSAIDFTGDSSAVYPLP</sequence>
<feature type="chain" id="PRO_0000403680" description="Fructose-1,6-bisphosphatase class 2">
    <location>
        <begin position="1"/>
        <end position="362"/>
    </location>
</feature>
<feature type="region of interest" description="Disordered" evidence="2">
    <location>
        <begin position="1"/>
        <end position="32"/>
    </location>
</feature>
<feature type="compositionally biased region" description="Polar residues" evidence="2">
    <location>
        <begin position="1"/>
        <end position="12"/>
    </location>
</feature>
<feature type="compositionally biased region" description="Basic and acidic residues" evidence="2">
    <location>
        <begin position="17"/>
        <end position="30"/>
    </location>
</feature>
<feature type="binding site" evidence="1">
    <location>
        <position position="61"/>
    </location>
    <ligand>
        <name>Mn(2+)</name>
        <dbReference type="ChEBI" id="CHEBI:29035"/>
        <label>1</label>
    </ligand>
</feature>
<feature type="binding site" evidence="1">
    <location>
        <position position="85"/>
    </location>
    <ligand>
        <name>Mn(2+)</name>
        <dbReference type="ChEBI" id="CHEBI:29035"/>
        <label>1</label>
    </ligand>
</feature>
<feature type="binding site" evidence="1">
    <location>
        <position position="113"/>
    </location>
    <ligand>
        <name>Mn(2+)</name>
        <dbReference type="ChEBI" id="CHEBI:29035"/>
        <label>2</label>
    </ligand>
</feature>
<feature type="binding site" evidence="1">
    <location>
        <begin position="116"/>
        <end position="118"/>
    </location>
    <ligand>
        <name>substrate</name>
    </ligand>
</feature>
<feature type="binding site" evidence="1">
    <location>
        <position position="116"/>
    </location>
    <ligand>
        <name>Mn(2+)</name>
        <dbReference type="ChEBI" id="CHEBI:29035"/>
        <label>2</label>
    </ligand>
</feature>
<feature type="binding site" evidence="1">
    <location>
        <position position="148"/>
    </location>
    <ligand>
        <name>substrate</name>
    </ligand>
</feature>
<feature type="binding site" evidence="1">
    <location>
        <begin position="193"/>
        <end position="195"/>
    </location>
    <ligand>
        <name>substrate</name>
    </ligand>
</feature>
<feature type="binding site" evidence="1">
    <location>
        <begin position="215"/>
        <end position="217"/>
    </location>
    <ligand>
        <name>substrate</name>
    </ligand>
</feature>
<feature type="binding site" evidence="1">
    <location>
        <position position="239"/>
    </location>
    <ligand>
        <name>substrate</name>
    </ligand>
</feature>
<feature type="binding site" evidence="1">
    <location>
        <position position="242"/>
    </location>
    <ligand>
        <name>Mn(2+)</name>
        <dbReference type="ChEBI" id="CHEBI:29035"/>
        <label>2</label>
    </ligand>
</feature>
<evidence type="ECO:0000250" key="1"/>
<evidence type="ECO:0000256" key="2">
    <source>
        <dbReference type="SAM" id="MobiDB-lite"/>
    </source>
</evidence>
<evidence type="ECO:0000305" key="3"/>
<proteinExistence type="inferred from homology"/>
<reference key="1">
    <citation type="submission" date="2007-04" db="EMBL/GenBank/DDBJ databases">
        <title>The complete genome sequence of Mycobacterium tuberculosis F11.</title>
        <authorList>
            <person name="Birren B."/>
            <person name="Lander E."/>
            <person name="Galagan J."/>
            <person name="Devon K."/>
            <person name="Nusbaum C."/>
            <person name="Borowsky M.L."/>
            <person name="Grabherr M."/>
            <person name="Mauceli E."/>
            <person name="Brockman W."/>
            <person name="Young S."/>
            <person name="LaButti K."/>
            <person name="Pushparaj V."/>
            <person name="Sykes S."/>
            <person name="Baldwin J."/>
            <person name="Fitzgerald M."/>
            <person name="Bloom T."/>
            <person name="Zimmer A."/>
            <person name="Settipalli S."/>
            <person name="Shea T."/>
            <person name="Arachchi H."/>
            <person name="Macdonald P."/>
            <person name="Abouelleil A."/>
            <person name="Lui A."/>
            <person name="Priest M."/>
            <person name="Berlin A."/>
            <person name="Gearin G."/>
            <person name="Brown A."/>
            <person name="Aftuck L."/>
            <person name="Bessette D."/>
            <person name="Allen N."/>
            <person name="Lubonja R."/>
            <person name="Lokyitsang T."/>
            <person name="Matthews C."/>
            <person name="Dunbar C."/>
            <person name="Benamara M."/>
            <person name="Nguyen T."/>
            <person name="Negash T."/>
            <person name="DeCaprio D."/>
            <person name="Crawford M."/>
            <person name="Koehrsen M."/>
            <person name="Engels R."/>
            <person name="Montgomery P."/>
            <person name="Pearson M."/>
            <person name="Howarth C."/>
            <person name="Kodira C."/>
            <person name="Zeng Q."/>
            <person name="Yandava C."/>
            <person name="O'Leary S."/>
            <person name="Alvarado L."/>
            <person name="Victor T."/>
            <person name="Murray M."/>
        </authorList>
    </citation>
    <scope>NUCLEOTIDE SEQUENCE [LARGE SCALE GENOMIC DNA]</scope>
    <source>
        <strain>F11</strain>
    </source>
</reference>
<dbReference type="EC" id="3.1.3.11"/>
<dbReference type="EMBL" id="CP000717">
    <property type="protein sequence ID" value="ABR05463.1"/>
    <property type="status" value="ALT_INIT"/>
    <property type="molecule type" value="Genomic_DNA"/>
</dbReference>
<dbReference type="RefSeq" id="WP_003898726.1">
    <property type="nucleotide sequence ID" value="NZ_KK339377.1"/>
</dbReference>
<dbReference type="SMR" id="A5WLC4"/>
<dbReference type="GeneID" id="45425073"/>
<dbReference type="KEGG" id="mtf:TBFG_11120"/>
<dbReference type="PATRIC" id="fig|336982.11.peg.1232"/>
<dbReference type="HOGENOM" id="CLU_054938_0_0_11"/>
<dbReference type="UniPathway" id="UPA00138"/>
<dbReference type="GO" id="GO:0005829">
    <property type="term" value="C:cytosol"/>
    <property type="evidence" value="ECO:0007669"/>
    <property type="project" value="TreeGrafter"/>
</dbReference>
<dbReference type="GO" id="GO:0042132">
    <property type="term" value="F:fructose 1,6-bisphosphate 1-phosphatase activity"/>
    <property type="evidence" value="ECO:0007669"/>
    <property type="project" value="UniProtKB-EC"/>
</dbReference>
<dbReference type="GO" id="GO:0046872">
    <property type="term" value="F:metal ion binding"/>
    <property type="evidence" value="ECO:0007669"/>
    <property type="project" value="UniProtKB-KW"/>
</dbReference>
<dbReference type="GO" id="GO:0030388">
    <property type="term" value="P:fructose 1,6-bisphosphate metabolic process"/>
    <property type="evidence" value="ECO:0007669"/>
    <property type="project" value="TreeGrafter"/>
</dbReference>
<dbReference type="GO" id="GO:0006094">
    <property type="term" value="P:gluconeogenesis"/>
    <property type="evidence" value="ECO:0007669"/>
    <property type="project" value="UniProtKB-UniPathway"/>
</dbReference>
<dbReference type="GO" id="GO:0006071">
    <property type="term" value="P:glycerol metabolic process"/>
    <property type="evidence" value="ECO:0007669"/>
    <property type="project" value="InterPro"/>
</dbReference>
<dbReference type="CDD" id="cd01516">
    <property type="entry name" value="FBPase_glpX"/>
    <property type="match status" value="1"/>
</dbReference>
<dbReference type="FunFam" id="3.40.190.90:FF:000001">
    <property type="entry name" value="Fructose-1,6-bisphosphatase"/>
    <property type="match status" value="1"/>
</dbReference>
<dbReference type="Gene3D" id="3.40.190.90">
    <property type="match status" value="1"/>
</dbReference>
<dbReference type="Gene3D" id="3.30.540.10">
    <property type="entry name" value="Fructose-1,6-Bisphosphatase, subunit A, domain 1"/>
    <property type="match status" value="1"/>
</dbReference>
<dbReference type="InterPro" id="IPR004464">
    <property type="entry name" value="FBPase_class-2/SBPase"/>
</dbReference>
<dbReference type="NCBIfam" id="TIGR00330">
    <property type="entry name" value="glpX"/>
    <property type="match status" value="1"/>
</dbReference>
<dbReference type="PANTHER" id="PTHR30447:SF0">
    <property type="entry name" value="FRUCTOSE-1,6-BISPHOSPHATASE 1 CLASS 2-RELATED"/>
    <property type="match status" value="1"/>
</dbReference>
<dbReference type="PANTHER" id="PTHR30447">
    <property type="entry name" value="FRUCTOSE-1,6-BISPHOSPHATASE CLASS 2"/>
    <property type="match status" value="1"/>
</dbReference>
<dbReference type="Pfam" id="PF03320">
    <property type="entry name" value="FBPase_glpX"/>
    <property type="match status" value="1"/>
</dbReference>
<dbReference type="PIRSF" id="PIRSF004532">
    <property type="entry name" value="GlpX"/>
    <property type="match status" value="1"/>
</dbReference>
<dbReference type="SUPFAM" id="SSF56655">
    <property type="entry name" value="Carbohydrate phosphatase"/>
    <property type="match status" value="1"/>
</dbReference>
<keyword id="KW-0119">Carbohydrate metabolism</keyword>
<keyword id="KW-0963">Cytoplasm</keyword>
<keyword id="KW-0378">Hydrolase</keyword>
<keyword id="KW-0464">Manganese</keyword>
<keyword id="KW-0479">Metal-binding</keyword>
<protein>
    <recommendedName>
        <fullName>Fructose-1,6-bisphosphatase class 2</fullName>
        <shortName>FBPase class 2</shortName>
        <ecNumber>3.1.3.11</ecNumber>
    </recommendedName>
    <alternativeName>
        <fullName>D-fructose-1,6-bisphosphate 1-phosphohydrolase class 2</fullName>
    </alternativeName>
</protein>
<organism>
    <name type="scientific">Mycobacterium tuberculosis (strain F11)</name>
    <dbReference type="NCBI Taxonomy" id="336982"/>
    <lineage>
        <taxon>Bacteria</taxon>
        <taxon>Bacillati</taxon>
        <taxon>Actinomycetota</taxon>
        <taxon>Actinomycetes</taxon>
        <taxon>Mycobacteriales</taxon>
        <taxon>Mycobacteriaceae</taxon>
        <taxon>Mycobacterium</taxon>
        <taxon>Mycobacterium tuberculosis complex</taxon>
    </lineage>
</organism>
<name>GLPX_MYCTF</name>
<comment type="function">
    <text evidence="1">Catalyzes the hydrolysis of fructose 1,6-bisphosphate to fructose 6-phosphate.</text>
</comment>
<comment type="catalytic activity">
    <reaction>
        <text>beta-D-fructose 1,6-bisphosphate + H2O = beta-D-fructose 6-phosphate + phosphate</text>
        <dbReference type="Rhea" id="RHEA:11064"/>
        <dbReference type="ChEBI" id="CHEBI:15377"/>
        <dbReference type="ChEBI" id="CHEBI:32966"/>
        <dbReference type="ChEBI" id="CHEBI:43474"/>
        <dbReference type="ChEBI" id="CHEBI:57634"/>
        <dbReference type="EC" id="3.1.3.11"/>
    </reaction>
</comment>
<comment type="cofactor">
    <cofactor evidence="1">
        <name>Mn(2+)</name>
        <dbReference type="ChEBI" id="CHEBI:29035"/>
    </cofactor>
</comment>
<comment type="pathway">
    <text>Carbohydrate biosynthesis; gluconeogenesis.</text>
</comment>
<comment type="subcellular location">
    <subcellularLocation>
        <location evidence="1">Cytoplasm</location>
    </subcellularLocation>
</comment>
<comment type="similarity">
    <text evidence="3">Belongs to the FBPase class 2 family.</text>
</comment>
<comment type="sequence caution" evidence="3">
    <conflict type="erroneous initiation">
        <sequence resource="EMBL-CDS" id="ABR05463"/>
    </conflict>
    <text>Truncated N-terminus.</text>
</comment>
<accession>A5WLC4</accession>